<comment type="function">
    <text evidence="1">Involved in the regulation of glutamine synthetase GlnA, a key enzyme in the process to assimilate ammonia. When cellular nitrogen levels are high, the C-terminal adenylyl transferase (AT) inactivates GlnA by covalent transfer of an adenylyl group from ATP to specific tyrosine residue of GlnA, thus reducing its activity. Conversely, when nitrogen levels are low, the N-terminal adenylyl removase (AR) activates GlnA by removing the adenylyl group by phosphorolysis, increasing its activity. The regulatory region of GlnE binds the signal transduction protein PII (GlnB) which indicates the nitrogen status of the cell.</text>
</comment>
<comment type="catalytic activity">
    <reaction evidence="1">
        <text>[glutamine synthetase]-O(4)-(5'-adenylyl)-L-tyrosine + phosphate = [glutamine synthetase]-L-tyrosine + ADP</text>
        <dbReference type="Rhea" id="RHEA:43716"/>
        <dbReference type="Rhea" id="RHEA-COMP:10660"/>
        <dbReference type="Rhea" id="RHEA-COMP:10661"/>
        <dbReference type="ChEBI" id="CHEBI:43474"/>
        <dbReference type="ChEBI" id="CHEBI:46858"/>
        <dbReference type="ChEBI" id="CHEBI:83624"/>
        <dbReference type="ChEBI" id="CHEBI:456216"/>
        <dbReference type="EC" id="2.7.7.89"/>
    </reaction>
</comment>
<comment type="catalytic activity">
    <reaction evidence="1">
        <text>[glutamine synthetase]-L-tyrosine + ATP = [glutamine synthetase]-O(4)-(5'-adenylyl)-L-tyrosine + diphosphate</text>
        <dbReference type="Rhea" id="RHEA:18589"/>
        <dbReference type="Rhea" id="RHEA-COMP:10660"/>
        <dbReference type="Rhea" id="RHEA-COMP:10661"/>
        <dbReference type="ChEBI" id="CHEBI:30616"/>
        <dbReference type="ChEBI" id="CHEBI:33019"/>
        <dbReference type="ChEBI" id="CHEBI:46858"/>
        <dbReference type="ChEBI" id="CHEBI:83624"/>
        <dbReference type="EC" id="2.7.7.42"/>
    </reaction>
</comment>
<comment type="cofactor">
    <cofactor evidence="1">
        <name>Mg(2+)</name>
        <dbReference type="ChEBI" id="CHEBI:18420"/>
    </cofactor>
</comment>
<comment type="similarity">
    <text evidence="1">Belongs to the GlnE family.</text>
</comment>
<sequence length="948" mass="109334">MSLPSALLPTAELHYQSLISEHPHIANWPSSVLNQLRYVLGLSQFVAQTLQRDDPLCQVLPSLLAKPSREQYYRSELAQWLAECQDEAVAQKRLRQFRNQEMVYIAWRDFCASWTLEESLSHLSQLAEALIFESYQWLYQRCCLEMGTPCNAQGEAQPMLIIGMGKLGGGELNFSSDIDLIFTYPENGETQGARRSIANAQFFTRLGQRLIKLLDQSTPDGFCYRVDMRLRPFGDSGPLAMSYAALEDYYQEQGRDWERYAMIKARVMGREMYPQYQELRQMLRPFVFRRYIDFSAIQSLRRMKSMISSEVRRRGLSNNIKLGAGGIREVEFIAQVFQLIRGGREPSLRKRGLLETLDAIAELELLTREQVQDLRDAYRFLRRLENLLQAMADKQTQTLPDKEDDQLRLSIAIGLADWPSLQREVSEHMQRVHRVFATLIGEEDEEEEHTVARHFHELWDMAHKPEVIEHIIEQDLGLSDAGEQIRTITQFKDDLAKRTIGPRGREVLNRLMPKVYQAVFAHPDAEFGLSRVLALLHSIATRTTYLELLDEHPAALVQLVRLCTASPMISEQLARYPILLDELIDPQHLYNPIPLESYQTELRDFLARIPEEDMEQQMEGLRQFKQISILRIAAADIAGVLPVMKVSDHLTYLAEAIVEAVVSQAWLQVSSKYGEPTHLKHRDGRGFAVVGYGKVGGWELGYNSDLDIVFMHDCPVEVNTDGEKSIDGRQFYLRLAQRIIHIFSTRTASGILYEVDTRLRPSGASGLLVSPTDAFDEYQRQEAWTWEHQALVRARMIYGDAPLQQAFANTRHQILCLPREEHKLKQEVVEMRIKMRDHLGGKKAGRFMLKQDEGGITDIEFLAQYLVLRFSHQQPKLTRWSDNVRIFESLMNHQVMSESQALALTHAYTSMRDQIHRRNLLNQSADVRDSQFVVEREQVIQAWQQWLG</sequence>
<keyword id="KW-0067">ATP-binding</keyword>
<keyword id="KW-0460">Magnesium</keyword>
<keyword id="KW-0511">Multifunctional enzyme</keyword>
<keyword id="KW-0547">Nucleotide-binding</keyword>
<keyword id="KW-0548">Nucleotidyltransferase</keyword>
<keyword id="KW-1185">Reference proteome</keyword>
<keyword id="KW-0808">Transferase</keyword>
<feature type="chain" id="PRO_0000209281" description="Bifunctional glutamine synthetase adenylyltransferase/adenylyl-removing enzyme">
    <location>
        <begin position="1"/>
        <end position="948"/>
    </location>
</feature>
<feature type="region of interest" description="Adenylyl removase" evidence="1">
    <location>
        <begin position="1"/>
        <end position="444"/>
    </location>
</feature>
<feature type="region of interest" description="Adenylyl transferase" evidence="1">
    <location>
        <begin position="452"/>
        <end position="948"/>
    </location>
</feature>
<evidence type="ECO:0000255" key="1">
    <source>
        <dbReference type="HAMAP-Rule" id="MF_00802"/>
    </source>
</evidence>
<organism>
    <name type="scientific">Vibrio cholerae serotype O1 (strain ATCC 39315 / El Tor Inaba N16961)</name>
    <dbReference type="NCBI Taxonomy" id="243277"/>
    <lineage>
        <taxon>Bacteria</taxon>
        <taxon>Pseudomonadati</taxon>
        <taxon>Pseudomonadota</taxon>
        <taxon>Gammaproteobacteria</taxon>
        <taxon>Vibrionales</taxon>
        <taxon>Vibrionaceae</taxon>
        <taxon>Vibrio</taxon>
    </lineage>
</organism>
<reference key="1">
    <citation type="journal article" date="2000" name="Nature">
        <title>DNA sequence of both chromosomes of the cholera pathogen Vibrio cholerae.</title>
        <authorList>
            <person name="Heidelberg J.F."/>
            <person name="Eisen J.A."/>
            <person name="Nelson W.C."/>
            <person name="Clayton R.A."/>
            <person name="Gwinn M.L."/>
            <person name="Dodson R.J."/>
            <person name="Haft D.H."/>
            <person name="Hickey E.K."/>
            <person name="Peterson J.D."/>
            <person name="Umayam L.A."/>
            <person name="Gill S.R."/>
            <person name="Nelson K.E."/>
            <person name="Read T.D."/>
            <person name="Tettelin H."/>
            <person name="Richardson D.L."/>
            <person name="Ermolaeva M.D."/>
            <person name="Vamathevan J.J."/>
            <person name="Bass S."/>
            <person name="Qin H."/>
            <person name="Dragoi I."/>
            <person name="Sellers P."/>
            <person name="McDonald L.A."/>
            <person name="Utterback T.R."/>
            <person name="Fleischmann R.D."/>
            <person name="Nierman W.C."/>
            <person name="White O."/>
            <person name="Salzberg S.L."/>
            <person name="Smith H.O."/>
            <person name="Colwell R.R."/>
            <person name="Mekalanos J.J."/>
            <person name="Venter J.C."/>
            <person name="Fraser C.M."/>
        </authorList>
    </citation>
    <scope>NUCLEOTIDE SEQUENCE [LARGE SCALE GENOMIC DNA]</scope>
    <source>
        <strain>ATCC 39315 / El Tor Inaba N16961</strain>
    </source>
</reference>
<proteinExistence type="inferred from homology"/>
<gene>
    <name evidence="1" type="primary">glnE</name>
    <name type="ordered locus">VC_2438</name>
</gene>
<dbReference type="EC" id="2.7.7.89" evidence="1"/>
<dbReference type="EC" id="2.7.7.42" evidence="1"/>
<dbReference type="EMBL" id="AE003852">
    <property type="protein sequence ID" value="AAF95580.1"/>
    <property type="molecule type" value="Genomic_DNA"/>
</dbReference>
<dbReference type="PIR" id="C82077">
    <property type="entry name" value="C82077"/>
</dbReference>
<dbReference type="RefSeq" id="NP_232067.1">
    <property type="nucleotide sequence ID" value="NC_002505.1"/>
</dbReference>
<dbReference type="RefSeq" id="WP_000056837.1">
    <property type="nucleotide sequence ID" value="NZ_LT906614.1"/>
</dbReference>
<dbReference type="SMR" id="Q9KPD4"/>
<dbReference type="STRING" id="243277.VC_2438"/>
<dbReference type="DNASU" id="2612980"/>
<dbReference type="EnsemblBacteria" id="AAF95580">
    <property type="protein sequence ID" value="AAF95580"/>
    <property type="gene ID" value="VC_2438"/>
</dbReference>
<dbReference type="KEGG" id="vch:VC_2438"/>
<dbReference type="PATRIC" id="fig|243277.26.peg.2323"/>
<dbReference type="eggNOG" id="COG1391">
    <property type="taxonomic scope" value="Bacteria"/>
</dbReference>
<dbReference type="HOGENOM" id="CLU_006233_0_1_6"/>
<dbReference type="Proteomes" id="UP000000584">
    <property type="component" value="Chromosome 1"/>
</dbReference>
<dbReference type="GO" id="GO:0005829">
    <property type="term" value="C:cytosol"/>
    <property type="evidence" value="ECO:0000318"/>
    <property type="project" value="GO_Central"/>
</dbReference>
<dbReference type="GO" id="GO:0008882">
    <property type="term" value="F:[glutamate-ammonia-ligase] adenylyltransferase activity"/>
    <property type="evidence" value="ECO:0000318"/>
    <property type="project" value="GO_Central"/>
</dbReference>
<dbReference type="GO" id="GO:0047388">
    <property type="term" value="F:[glutamine synthetase]-adenylyl-L-tyrosine phosphorylase activity"/>
    <property type="evidence" value="ECO:0007669"/>
    <property type="project" value="UniProtKB-EC"/>
</dbReference>
<dbReference type="GO" id="GO:0005524">
    <property type="term" value="F:ATP binding"/>
    <property type="evidence" value="ECO:0007669"/>
    <property type="project" value="UniProtKB-UniRule"/>
</dbReference>
<dbReference type="GO" id="GO:0000287">
    <property type="term" value="F:magnesium ion binding"/>
    <property type="evidence" value="ECO:0007669"/>
    <property type="project" value="UniProtKB-UniRule"/>
</dbReference>
<dbReference type="GO" id="GO:0000820">
    <property type="term" value="P:regulation of glutamine family amino acid metabolic process"/>
    <property type="evidence" value="ECO:0000318"/>
    <property type="project" value="GO_Central"/>
</dbReference>
<dbReference type="CDD" id="cd05401">
    <property type="entry name" value="NT_GlnE_GlnD_like"/>
    <property type="match status" value="2"/>
</dbReference>
<dbReference type="FunFam" id="1.20.120.1510:FF:000001">
    <property type="entry name" value="Bifunctional glutamine synthetase adenylyltransferase/adenylyl-removing enzyme"/>
    <property type="match status" value="1"/>
</dbReference>
<dbReference type="FunFam" id="1.20.120.330:FF:000005">
    <property type="entry name" value="Bifunctional glutamine synthetase adenylyltransferase/adenylyl-removing enzyme"/>
    <property type="match status" value="1"/>
</dbReference>
<dbReference type="FunFam" id="1.20.120.330:FF:000008">
    <property type="entry name" value="Bifunctional glutamine synthetase adenylyltransferase/adenylyl-removing enzyme"/>
    <property type="match status" value="1"/>
</dbReference>
<dbReference type="FunFam" id="3.30.460.10:FF:000009">
    <property type="entry name" value="Bifunctional glutamine synthetase adenylyltransferase/adenylyl-removing enzyme"/>
    <property type="match status" value="1"/>
</dbReference>
<dbReference type="FunFam" id="3.30.460.10:FF:000014">
    <property type="entry name" value="Bifunctional glutamine synthetase adenylyltransferase/adenylyl-removing enzyme"/>
    <property type="match status" value="1"/>
</dbReference>
<dbReference type="Gene3D" id="1.20.120.1510">
    <property type="match status" value="1"/>
</dbReference>
<dbReference type="Gene3D" id="3.30.460.10">
    <property type="entry name" value="Beta Polymerase, domain 2"/>
    <property type="match status" value="2"/>
</dbReference>
<dbReference type="Gene3D" id="1.10.4050.10">
    <property type="entry name" value="Glutamine synthase adenylyltransferase GlnE"/>
    <property type="match status" value="1"/>
</dbReference>
<dbReference type="Gene3D" id="1.20.120.330">
    <property type="entry name" value="Nucleotidyltransferases domain 2"/>
    <property type="match status" value="2"/>
</dbReference>
<dbReference type="HAMAP" id="MF_00802">
    <property type="entry name" value="GlnE"/>
    <property type="match status" value="1"/>
</dbReference>
<dbReference type="InterPro" id="IPR023057">
    <property type="entry name" value="GlnE"/>
</dbReference>
<dbReference type="InterPro" id="IPR005190">
    <property type="entry name" value="GlnE_rpt_dom"/>
</dbReference>
<dbReference type="InterPro" id="IPR043519">
    <property type="entry name" value="NT_sf"/>
</dbReference>
<dbReference type="InterPro" id="IPR013546">
    <property type="entry name" value="PII_UdlTrfase/GS_AdlTrfase"/>
</dbReference>
<dbReference type="NCBIfam" id="NF008292">
    <property type="entry name" value="PRK11072.1"/>
    <property type="match status" value="1"/>
</dbReference>
<dbReference type="PANTHER" id="PTHR30621:SF0">
    <property type="entry name" value="BIFUNCTIONAL GLUTAMINE SYNTHETASE ADENYLYLTRANSFERASE_ADENYLYL-REMOVING ENZYME"/>
    <property type="match status" value="1"/>
</dbReference>
<dbReference type="PANTHER" id="PTHR30621">
    <property type="entry name" value="GLUTAMINE SYNTHETASE ADENYLYLTRANSFERASE"/>
    <property type="match status" value="1"/>
</dbReference>
<dbReference type="Pfam" id="PF08335">
    <property type="entry name" value="GlnD_UR_UTase"/>
    <property type="match status" value="2"/>
</dbReference>
<dbReference type="Pfam" id="PF03710">
    <property type="entry name" value="GlnE"/>
    <property type="match status" value="2"/>
</dbReference>
<dbReference type="SUPFAM" id="SSF81301">
    <property type="entry name" value="Nucleotidyltransferase"/>
    <property type="match status" value="2"/>
</dbReference>
<dbReference type="SUPFAM" id="SSF81593">
    <property type="entry name" value="Nucleotidyltransferase substrate binding subunit/domain"/>
    <property type="match status" value="2"/>
</dbReference>
<protein>
    <recommendedName>
        <fullName evidence="1">Bifunctional glutamine synthetase adenylyltransferase/adenylyl-removing enzyme</fullName>
    </recommendedName>
    <alternativeName>
        <fullName evidence="1">ATP:glutamine synthetase adenylyltransferase</fullName>
    </alternativeName>
    <alternativeName>
        <fullName evidence="1">ATase</fullName>
    </alternativeName>
    <domain>
        <recommendedName>
            <fullName evidence="1">Glutamine synthetase adenylyl-L-tyrosine phosphorylase</fullName>
            <ecNumber evidence="1">2.7.7.89</ecNumber>
        </recommendedName>
        <alternativeName>
            <fullName evidence="1">Adenylyl removase</fullName>
            <shortName evidence="1">AR</shortName>
            <shortName evidence="1">AT-N</shortName>
        </alternativeName>
    </domain>
    <domain>
        <recommendedName>
            <fullName evidence="1">Glutamine synthetase adenylyl transferase</fullName>
            <ecNumber evidence="1">2.7.7.42</ecNumber>
        </recommendedName>
        <alternativeName>
            <fullName evidence="1">Adenylyl transferase</fullName>
            <shortName evidence="1">AT</shortName>
            <shortName evidence="1">AT-C</shortName>
        </alternativeName>
    </domain>
</protein>
<accession>Q9KPD4</accession>
<name>GLNE_VIBCH</name>